<protein>
    <recommendedName>
        <fullName evidence="1">Putative pre-16S rRNA nuclease</fullName>
        <ecNumber evidence="1">3.1.-.-</ecNumber>
    </recommendedName>
</protein>
<organism>
    <name type="scientific">Sulfurihydrogenibium sp. (strain YO3AOP1)</name>
    <dbReference type="NCBI Taxonomy" id="436114"/>
    <lineage>
        <taxon>Bacteria</taxon>
        <taxon>Pseudomonadati</taxon>
        <taxon>Aquificota</taxon>
        <taxon>Aquificia</taxon>
        <taxon>Aquificales</taxon>
        <taxon>Hydrogenothermaceae</taxon>
        <taxon>Sulfurihydrogenibium</taxon>
    </lineage>
</organism>
<keyword id="KW-0963">Cytoplasm</keyword>
<keyword id="KW-0378">Hydrolase</keyword>
<keyword id="KW-0540">Nuclease</keyword>
<keyword id="KW-0690">Ribosome biogenesis</keyword>
<comment type="function">
    <text evidence="1">Could be a nuclease involved in processing of the 5'-end of pre-16S rRNA.</text>
</comment>
<comment type="subcellular location">
    <subcellularLocation>
        <location evidence="1">Cytoplasm</location>
    </subcellularLocation>
</comment>
<comment type="similarity">
    <text evidence="1">Belongs to the YqgF nuclease family.</text>
</comment>
<proteinExistence type="inferred from homology"/>
<reference key="1">
    <citation type="journal article" date="2009" name="J. Bacteriol.">
        <title>Complete and draft genome sequences of six members of the Aquificales.</title>
        <authorList>
            <person name="Reysenbach A.-L."/>
            <person name="Hamamura N."/>
            <person name="Podar M."/>
            <person name="Griffiths E."/>
            <person name="Ferreira S."/>
            <person name="Hochstein R."/>
            <person name="Heidelberg J."/>
            <person name="Johnson J."/>
            <person name="Mead D."/>
            <person name="Pohorille A."/>
            <person name="Sarmiento M."/>
            <person name="Schweighofer K."/>
            <person name="Seshadri R."/>
            <person name="Voytek M.A."/>
        </authorList>
    </citation>
    <scope>NUCLEOTIDE SEQUENCE [LARGE SCALE GENOMIC DNA]</scope>
    <source>
        <strain>YO3AOP1</strain>
    </source>
</reference>
<evidence type="ECO:0000255" key="1">
    <source>
        <dbReference type="HAMAP-Rule" id="MF_00651"/>
    </source>
</evidence>
<sequence>MSRILGLDIGLKRIGVAVSDPFGVTATPLEFILNDEKVFEKINDLIKNYKISKIVIGLPLTLKGEEGEQARYTKEFVENLKNHIPQDIEIIFVDERFTSSLAEKTLLQTKKKNKKEKIDSLSAVFILQTYLDRLSFSNEATNYSY</sequence>
<name>YQGF_SULSY</name>
<feature type="chain" id="PRO_1000131079" description="Putative pre-16S rRNA nuclease">
    <location>
        <begin position="1"/>
        <end position="145"/>
    </location>
</feature>
<dbReference type="EC" id="3.1.-.-" evidence="1"/>
<dbReference type="EMBL" id="CP001080">
    <property type="protein sequence ID" value="ACD66115.1"/>
    <property type="molecule type" value="Genomic_DNA"/>
</dbReference>
<dbReference type="RefSeq" id="WP_012459196.1">
    <property type="nucleotide sequence ID" value="NC_010730.1"/>
</dbReference>
<dbReference type="SMR" id="B2V842"/>
<dbReference type="STRING" id="436114.SYO3AOP1_0474"/>
<dbReference type="KEGG" id="sul:SYO3AOP1_0474"/>
<dbReference type="eggNOG" id="COG0816">
    <property type="taxonomic scope" value="Bacteria"/>
</dbReference>
<dbReference type="HOGENOM" id="CLU_098240_2_0_0"/>
<dbReference type="GO" id="GO:0005829">
    <property type="term" value="C:cytosol"/>
    <property type="evidence" value="ECO:0007669"/>
    <property type="project" value="TreeGrafter"/>
</dbReference>
<dbReference type="GO" id="GO:0004518">
    <property type="term" value="F:nuclease activity"/>
    <property type="evidence" value="ECO:0007669"/>
    <property type="project" value="UniProtKB-KW"/>
</dbReference>
<dbReference type="GO" id="GO:0000967">
    <property type="term" value="P:rRNA 5'-end processing"/>
    <property type="evidence" value="ECO:0007669"/>
    <property type="project" value="UniProtKB-UniRule"/>
</dbReference>
<dbReference type="CDD" id="cd16964">
    <property type="entry name" value="YqgF"/>
    <property type="match status" value="1"/>
</dbReference>
<dbReference type="Gene3D" id="3.30.420.140">
    <property type="entry name" value="YqgF/RNase H-like domain"/>
    <property type="match status" value="1"/>
</dbReference>
<dbReference type="HAMAP" id="MF_00651">
    <property type="entry name" value="Nuclease_YqgF"/>
    <property type="match status" value="1"/>
</dbReference>
<dbReference type="InterPro" id="IPR012337">
    <property type="entry name" value="RNaseH-like_sf"/>
</dbReference>
<dbReference type="InterPro" id="IPR005227">
    <property type="entry name" value="YqgF"/>
</dbReference>
<dbReference type="InterPro" id="IPR006641">
    <property type="entry name" value="YqgF/RNaseH-like_dom"/>
</dbReference>
<dbReference type="InterPro" id="IPR037027">
    <property type="entry name" value="YqgF/RNaseH-like_dom_sf"/>
</dbReference>
<dbReference type="NCBIfam" id="TIGR00250">
    <property type="entry name" value="RNAse_H_YqgF"/>
    <property type="match status" value="1"/>
</dbReference>
<dbReference type="PANTHER" id="PTHR33317">
    <property type="entry name" value="POLYNUCLEOTIDYL TRANSFERASE, RIBONUCLEASE H-LIKE SUPERFAMILY PROTEIN"/>
    <property type="match status" value="1"/>
</dbReference>
<dbReference type="PANTHER" id="PTHR33317:SF4">
    <property type="entry name" value="POLYNUCLEOTIDYL TRANSFERASE, RIBONUCLEASE H-LIKE SUPERFAMILY PROTEIN"/>
    <property type="match status" value="1"/>
</dbReference>
<dbReference type="Pfam" id="PF03652">
    <property type="entry name" value="RuvX"/>
    <property type="match status" value="1"/>
</dbReference>
<dbReference type="SMART" id="SM00732">
    <property type="entry name" value="YqgFc"/>
    <property type="match status" value="1"/>
</dbReference>
<dbReference type="SUPFAM" id="SSF53098">
    <property type="entry name" value="Ribonuclease H-like"/>
    <property type="match status" value="1"/>
</dbReference>
<gene>
    <name type="ordered locus">SYO3AOP1_0474</name>
</gene>
<accession>B2V842</accession>